<organism>
    <name type="scientific">Yersinia pseudotuberculosis serotype O:3 (strain YPIII)</name>
    <dbReference type="NCBI Taxonomy" id="502800"/>
    <lineage>
        <taxon>Bacteria</taxon>
        <taxon>Pseudomonadati</taxon>
        <taxon>Pseudomonadota</taxon>
        <taxon>Gammaproteobacteria</taxon>
        <taxon>Enterobacterales</taxon>
        <taxon>Yersiniaceae</taxon>
        <taxon>Yersinia</taxon>
    </lineage>
</organism>
<comment type="function">
    <text evidence="1">Catalyzes the attachment of tyrosine to tRNA(Tyr) in a two-step reaction: tyrosine is first activated by ATP to form Tyr-AMP and then transferred to the acceptor end of tRNA(Tyr).</text>
</comment>
<comment type="catalytic activity">
    <reaction evidence="1">
        <text>tRNA(Tyr) + L-tyrosine + ATP = L-tyrosyl-tRNA(Tyr) + AMP + diphosphate + H(+)</text>
        <dbReference type="Rhea" id="RHEA:10220"/>
        <dbReference type="Rhea" id="RHEA-COMP:9706"/>
        <dbReference type="Rhea" id="RHEA-COMP:9707"/>
        <dbReference type="ChEBI" id="CHEBI:15378"/>
        <dbReference type="ChEBI" id="CHEBI:30616"/>
        <dbReference type="ChEBI" id="CHEBI:33019"/>
        <dbReference type="ChEBI" id="CHEBI:58315"/>
        <dbReference type="ChEBI" id="CHEBI:78442"/>
        <dbReference type="ChEBI" id="CHEBI:78536"/>
        <dbReference type="ChEBI" id="CHEBI:456215"/>
        <dbReference type="EC" id="6.1.1.1"/>
    </reaction>
</comment>
<comment type="subunit">
    <text evidence="1">Homodimer.</text>
</comment>
<comment type="subcellular location">
    <subcellularLocation>
        <location evidence="1">Cytoplasm</location>
    </subcellularLocation>
</comment>
<comment type="similarity">
    <text evidence="1">Belongs to the class-I aminoacyl-tRNA synthetase family. TyrS type 1 subfamily.</text>
</comment>
<evidence type="ECO:0000255" key="1">
    <source>
        <dbReference type="HAMAP-Rule" id="MF_02006"/>
    </source>
</evidence>
<dbReference type="EC" id="6.1.1.1" evidence="1"/>
<dbReference type="EMBL" id="CP000950">
    <property type="protein sequence ID" value="ACA68172.1"/>
    <property type="molecule type" value="Genomic_DNA"/>
</dbReference>
<dbReference type="RefSeq" id="WP_011192524.1">
    <property type="nucleotide sequence ID" value="NZ_CP009792.1"/>
</dbReference>
<dbReference type="SMR" id="B1JJR1"/>
<dbReference type="GeneID" id="49785720"/>
<dbReference type="KEGG" id="ypy:YPK_1881"/>
<dbReference type="PATRIC" id="fig|502800.11.peg.2551"/>
<dbReference type="GO" id="GO:0005829">
    <property type="term" value="C:cytosol"/>
    <property type="evidence" value="ECO:0007669"/>
    <property type="project" value="TreeGrafter"/>
</dbReference>
<dbReference type="GO" id="GO:0005524">
    <property type="term" value="F:ATP binding"/>
    <property type="evidence" value="ECO:0007669"/>
    <property type="project" value="UniProtKB-UniRule"/>
</dbReference>
<dbReference type="GO" id="GO:0003723">
    <property type="term" value="F:RNA binding"/>
    <property type="evidence" value="ECO:0007669"/>
    <property type="project" value="UniProtKB-KW"/>
</dbReference>
<dbReference type="GO" id="GO:0004831">
    <property type="term" value="F:tyrosine-tRNA ligase activity"/>
    <property type="evidence" value="ECO:0007669"/>
    <property type="project" value="UniProtKB-UniRule"/>
</dbReference>
<dbReference type="GO" id="GO:0006437">
    <property type="term" value="P:tyrosyl-tRNA aminoacylation"/>
    <property type="evidence" value="ECO:0007669"/>
    <property type="project" value="UniProtKB-UniRule"/>
</dbReference>
<dbReference type="CDD" id="cd00165">
    <property type="entry name" value="S4"/>
    <property type="match status" value="1"/>
</dbReference>
<dbReference type="CDD" id="cd00805">
    <property type="entry name" value="TyrRS_core"/>
    <property type="match status" value="1"/>
</dbReference>
<dbReference type="FunFam" id="1.10.240.10:FF:000001">
    <property type="entry name" value="Tyrosine--tRNA ligase"/>
    <property type="match status" value="1"/>
</dbReference>
<dbReference type="FunFam" id="3.10.290.10:FF:000007">
    <property type="entry name" value="Tyrosine--tRNA ligase"/>
    <property type="match status" value="1"/>
</dbReference>
<dbReference type="FunFam" id="3.40.50.620:FF:000008">
    <property type="entry name" value="Tyrosine--tRNA ligase"/>
    <property type="match status" value="1"/>
</dbReference>
<dbReference type="Gene3D" id="3.40.50.620">
    <property type="entry name" value="HUPs"/>
    <property type="match status" value="1"/>
</dbReference>
<dbReference type="Gene3D" id="3.10.290.10">
    <property type="entry name" value="RNA-binding S4 domain"/>
    <property type="match status" value="1"/>
</dbReference>
<dbReference type="Gene3D" id="1.10.240.10">
    <property type="entry name" value="Tyrosyl-Transfer RNA Synthetase"/>
    <property type="match status" value="1"/>
</dbReference>
<dbReference type="HAMAP" id="MF_02006">
    <property type="entry name" value="Tyr_tRNA_synth_type1"/>
    <property type="match status" value="1"/>
</dbReference>
<dbReference type="InterPro" id="IPR001412">
    <property type="entry name" value="aa-tRNA-synth_I_CS"/>
</dbReference>
<dbReference type="InterPro" id="IPR002305">
    <property type="entry name" value="aa-tRNA-synth_Ic"/>
</dbReference>
<dbReference type="InterPro" id="IPR014729">
    <property type="entry name" value="Rossmann-like_a/b/a_fold"/>
</dbReference>
<dbReference type="InterPro" id="IPR002942">
    <property type="entry name" value="S4_RNA-bd"/>
</dbReference>
<dbReference type="InterPro" id="IPR036986">
    <property type="entry name" value="S4_RNA-bd_sf"/>
</dbReference>
<dbReference type="InterPro" id="IPR054608">
    <property type="entry name" value="SYY-like_C"/>
</dbReference>
<dbReference type="InterPro" id="IPR002307">
    <property type="entry name" value="Tyr-tRNA-ligase"/>
</dbReference>
<dbReference type="InterPro" id="IPR024088">
    <property type="entry name" value="Tyr-tRNA-ligase_bac-type"/>
</dbReference>
<dbReference type="InterPro" id="IPR024107">
    <property type="entry name" value="Tyr-tRNA-ligase_bac_1"/>
</dbReference>
<dbReference type="NCBIfam" id="TIGR00234">
    <property type="entry name" value="tyrS"/>
    <property type="match status" value="1"/>
</dbReference>
<dbReference type="PANTHER" id="PTHR11766:SF0">
    <property type="entry name" value="TYROSINE--TRNA LIGASE, MITOCHONDRIAL"/>
    <property type="match status" value="1"/>
</dbReference>
<dbReference type="PANTHER" id="PTHR11766">
    <property type="entry name" value="TYROSYL-TRNA SYNTHETASE"/>
    <property type="match status" value="1"/>
</dbReference>
<dbReference type="Pfam" id="PF22421">
    <property type="entry name" value="SYY_C-terminal"/>
    <property type="match status" value="1"/>
</dbReference>
<dbReference type="Pfam" id="PF00579">
    <property type="entry name" value="tRNA-synt_1b"/>
    <property type="match status" value="1"/>
</dbReference>
<dbReference type="PRINTS" id="PR01040">
    <property type="entry name" value="TRNASYNTHTYR"/>
</dbReference>
<dbReference type="SMART" id="SM00363">
    <property type="entry name" value="S4"/>
    <property type="match status" value="1"/>
</dbReference>
<dbReference type="SUPFAM" id="SSF55174">
    <property type="entry name" value="Alpha-L RNA-binding motif"/>
    <property type="match status" value="1"/>
</dbReference>
<dbReference type="SUPFAM" id="SSF52374">
    <property type="entry name" value="Nucleotidylyl transferase"/>
    <property type="match status" value="1"/>
</dbReference>
<dbReference type="PROSITE" id="PS00178">
    <property type="entry name" value="AA_TRNA_LIGASE_I"/>
    <property type="match status" value="1"/>
</dbReference>
<dbReference type="PROSITE" id="PS50889">
    <property type="entry name" value="S4"/>
    <property type="match status" value="1"/>
</dbReference>
<accession>B1JJR1</accession>
<sequence>MTSSNLIKQLQERGLVAQVTDEDALAERLAQGPISLYCGFDPTADSLHLGHLVPLLCLKRFQLAGHRPVALVGGATGMIGDPSFKASERKLNTEDTVNEWVEKIRHQVSPFLDFDCGENSAIAANNYDWFGGMNVLTFLRDIGKHFSVNQMINKEAVKQRLNRDDSGISFTEFSYNLLQAYDFACLNKNHGVALQIGGSDQWGNITSGIDLTRRLHQQQVYGLTVPLITKADGTKFGKTEGGAVWLDPKKTSPYKFYQFWINTADADVYRFLKFFTFMSLEEINALEEEDKNSGKAPRAQYVLAENVTGMVHGPEGLAAAKRITESLFSGDLHDMTEADFAQLAQDGMPTVELNRDADLQQALVNAELVPSRGQARTMIGSNAVAINGEKQADPEYVFTDADRLFGRYTLLRRGKKHYCLISWL</sequence>
<feature type="chain" id="PRO_1000189351" description="Tyrosine--tRNA ligase">
    <location>
        <begin position="1"/>
        <end position="424"/>
    </location>
</feature>
<feature type="domain" description="S4 RNA-binding" evidence="1">
    <location>
        <begin position="357"/>
        <end position="414"/>
    </location>
</feature>
<feature type="short sequence motif" description="'HIGH' region">
    <location>
        <begin position="42"/>
        <end position="51"/>
    </location>
</feature>
<feature type="short sequence motif" description="'KMSKS' region">
    <location>
        <begin position="235"/>
        <end position="239"/>
    </location>
</feature>
<feature type="binding site" evidence="1">
    <location>
        <position position="37"/>
    </location>
    <ligand>
        <name>L-tyrosine</name>
        <dbReference type="ChEBI" id="CHEBI:58315"/>
    </ligand>
</feature>
<feature type="binding site" evidence="1">
    <location>
        <position position="175"/>
    </location>
    <ligand>
        <name>L-tyrosine</name>
        <dbReference type="ChEBI" id="CHEBI:58315"/>
    </ligand>
</feature>
<feature type="binding site" evidence="1">
    <location>
        <position position="179"/>
    </location>
    <ligand>
        <name>L-tyrosine</name>
        <dbReference type="ChEBI" id="CHEBI:58315"/>
    </ligand>
</feature>
<feature type="binding site" evidence="1">
    <location>
        <position position="238"/>
    </location>
    <ligand>
        <name>ATP</name>
        <dbReference type="ChEBI" id="CHEBI:30616"/>
    </ligand>
</feature>
<keyword id="KW-0030">Aminoacyl-tRNA synthetase</keyword>
<keyword id="KW-0067">ATP-binding</keyword>
<keyword id="KW-0963">Cytoplasm</keyword>
<keyword id="KW-0436">Ligase</keyword>
<keyword id="KW-0547">Nucleotide-binding</keyword>
<keyword id="KW-0648">Protein biosynthesis</keyword>
<keyword id="KW-0694">RNA-binding</keyword>
<reference key="1">
    <citation type="submission" date="2008-02" db="EMBL/GenBank/DDBJ databases">
        <title>Complete sequence of Yersinia pseudotuberculosis YPIII.</title>
        <authorList>
            <consortium name="US DOE Joint Genome Institute"/>
            <person name="Copeland A."/>
            <person name="Lucas S."/>
            <person name="Lapidus A."/>
            <person name="Glavina del Rio T."/>
            <person name="Dalin E."/>
            <person name="Tice H."/>
            <person name="Bruce D."/>
            <person name="Goodwin L."/>
            <person name="Pitluck S."/>
            <person name="Munk A.C."/>
            <person name="Brettin T."/>
            <person name="Detter J.C."/>
            <person name="Han C."/>
            <person name="Tapia R."/>
            <person name="Schmutz J."/>
            <person name="Larimer F."/>
            <person name="Land M."/>
            <person name="Hauser L."/>
            <person name="Challacombe J.F."/>
            <person name="Green L."/>
            <person name="Lindler L.E."/>
            <person name="Nikolich M.P."/>
            <person name="Richardson P."/>
        </authorList>
    </citation>
    <scope>NUCLEOTIDE SEQUENCE [LARGE SCALE GENOMIC DNA]</scope>
    <source>
        <strain>YPIII</strain>
    </source>
</reference>
<proteinExistence type="inferred from homology"/>
<protein>
    <recommendedName>
        <fullName evidence="1">Tyrosine--tRNA ligase</fullName>
        <ecNumber evidence="1">6.1.1.1</ecNumber>
    </recommendedName>
    <alternativeName>
        <fullName evidence="1">Tyrosyl-tRNA synthetase</fullName>
        <shortName evidence="1">TyrRS</shortName>
    </alternativeName>
</protein>
<gene>
    <name evidence="1" type="primary">tyrS</name>
    <name type="ordered locus">YPK_1881</name>
</gene>
<name>SYY_YERPY</name>